<organism>
    <name type="scientific">Xenopus laevis</name>
    <name type="common">African clawed frog</name>
    <dbReference type="NCBI Taxonomy" id="8355"/>
    <lineage>
        <taxon>Eukaryota</taxon>
        <taxon>Metazoa</taxon>
        <taxon>Chordata</taxon>
        <taxon>Craniata</taxon>
        <taxon>Vertebrata</taxon>
        <taxon>Euteleostomi</taxon>
        <taxon>Amphibia</taxon>
        <taxon>Batrachia</taxon>
        <taxon>Anura</taxon>
        <taxon>Pipoidea</taxon>
        <taxon>Pipidae</taxon>
        <taxon>Xenopodinae</taxon>
        <taxon>Xenopus</taxon>
        <taxon>Xenopus</taxon>
    </lineage>
</organism>
<keyword id="KW-0238">DNA-binding</keyword>
<keyword id="KW-0479">Metal-binding</keyword>
<keyword id="KW-0539">Nucleus</keyword>
<keyword id="KW-1185">Reference proteome</keyword>
<keyword id="KW-0677">Repeat</keyword>
<keyword id="KW-0804">Transcription</keyword>
<keyword id="KW-0805">Transcription regulation</keyword>
<keyword id="KW-0862">Zinc</keyword>
<keyword id="KW-0863">Zinc-finger</keyword>
<comment type="function">
    <text>May be involved in transcriptional regulation.</text>
</comment>
<comment type="subcellular location">
    <subcellularLocation>
        <location evidence="2">Nucleus</location>
    </subcellularLocation>
</comment>
<comment type="similarity">
    <text evidence="2">Belongs to the krueppel C2H2-type zinc-finger protein family.</text>
</comment>
<accession>P18715</accession>
<protein>
    <recommendedName>
        <fullName>Gastrula zinc finger protein XlCGF26.1</fullName>
    </recommendedName>
</protein>
<reference key="1">
    <citation type="journal article" date="1989" name="J. Mol. Biol.">
        <title>Second-order repeats in Xenopus laevis finger proteins.</title>
        <authorList>
            <person name="Nietfeld W."/>
            <person name="El-Baradi T."/>
            <person name="Mentzel H."/>
            <person name="Pieler T."/>
            <person name="Koester M."/>
            <person name="Poeting A."/>
            <person name="Knoechel W."/>
        </authorList>
    </citation>
    <scope>NUCLEOTIDE SEQUENCE</scope>
</reference>
<name>ZG26_XENLA</name>
<evidence type="ECO:0000255" key="1">
    <source>
        <dbReference type="PROSITE-ProRule" id="PRU00042"/>
    </source>
</evidence>
<evidence type="ECO:0000305" key="2"/>
<sequence>TGEKPFDCTECGKSFTDLKTLQHHYKIHTGEKPFICAECGKGFNQKTTLLNHSKIHTTEKPFPCTECGKCFTERKTLLNHNKIHTGEKPFICAECGIGFTQKTTLLNHSKIHTTEKPFPCTECGKCFTERKTLLNHNKIHTGEKPFICAECGIGFTQKTTLLNHSKIHTTEKPFPCTECGKCFAEKKTLQNHNKIHTGVKPFTCTDCGKSFTQRTSLQNHVKIHTGEKPFTCTECGKSFSEKKTLREHNKIHTGEKPFTCTYCGKSFSQRISLQNHFKIHTGEKPFSCTECGKCFTIKSTLQSHLKRTHTGEKPFTCTECGKSFTKKKILLKHNKIH</sequence>
<proteinExistence type="inferred from homology"/>
<feature type="chain" id="PRO_0000047789" description="Gastrula zinc finger protein XlCGF26.1">
    <location>
        <begin position="1" status="less than"/>
        <end position="337" status="greater than"/>
    </location>
</feature>
<feature type="zinc finger region" description="C2H2-type 1" evidence="1">
    <location>
        <begin position="6"/>
        <end position="28"/>
    </location>
</feature>
<feature type="zinc finger region" description="C2H2-type 2" evidence="1">
    <location>
        <begin position="34"/>
        <end position="56"/>
    </location>
</feature>
<feature type="zinc finger region" description="C2H2-type 3" evidence="1">
    <location>
        <begin position="62"/>
        <end position="84"/>
    </location>
</feature>
<feature type="zinc finger region" description="C2H2-type 4" evidence="1">
    <location>
        <begin position="90"/>
        <end position="112"/>
    </location>
</feature>
<feature type="zinc finger region" description="C2H2-type 5" evidence="1">
    <location>
        <begin position="118"/>
        <end position="140"/>
    </location>
</feature>
<feature type="zinc finger region" description="C2H2-type 6" evidence="1">
    <location>
        <begin position="146"/>
        <end position="168"/>
    </location>
</feature>
<feature type="zinc finger region" description="C2H2-type 7" evidence="1">
    <location>
        <begin position="174"/>
        <end position="196"/>
    </location>
</feature>
<feature type="zinc finger region" description="C2H2-type 8" evidence="1">
    <location>
        <begin position="202"/>
        <end position="224"/>
    </location>
</feature>
<feature type="zinc finger region" description="C2H2-type 9" evidence="1">
    <location>
        <begin position="230"/>
        <end position="252"/>
    </location>
</feature>
<feature type="zinc finger region" description="C2H2-type 10" evidence="1">
    <location>
        <begin position="258"/>
        <end position="280"/>
    </location>
</feature>
<feature type="zinc finger region" description="C2H2-type 11" evidence="1">
    <location>
        <begin position="286"/>
        <end position="309"/>
    </location>
</feature>
<feature type="zinc finger region" description="C2H2-type 12" evidence="1">
    <location>
        <begin position="315"/>
        <end position="337"/>
    </location>
</feature>
<feature type="non-terminal residue">
    <location>
        <position position="1"/>
    </location>
</feature>
<feature type="non-terminal residue">
    <location>
        <position position="337"/>
    </location>
</feature>
<dbReference type="PIR" id="S06566">
    <property type="entry name" value="S06566"/>
</dbReference>
<dbReference type="SMR" id="P18715"/>
<dbReference type="Proteomes" id="UP000186698">
    <property type="component" value="Unplaced"/>
</dbReference>
<dbReference type="GO" id="GO:0005634">
    <property type="term" value="C:nucleus"/>
    <property type="evidence" value="ECO:0007669"/>
    <property type="project" value="UniProtKB-SubCell"/>
</dbReference>
<dbReference type="GO" id="GO:0003677">
    <property type="term" value="F:DNA binding"/>
    <property type="evidence" value="ECO:0007669"/>
    <property type="project" value="UniProtKB-KW"/>
</dbReference>
<dbReference type="GO" id="GO:0000981">
    <property type="term" value="F:DNA-binding transcription factor activity, RNA polymerase II-specific"/>
    <property type="evidence" value="ECO:0007669"/>
    <property type="project" value="TreeGrafter"/>
</dbReference>
<dbReference type="GO" id="GO:0008270">
    <property type="term" value="F:zinc ion binding"/>
    <property type="evidence" value="ECO:0007669"/>
    <property type="project" value="UniProtKB-KW"/>
</dbReference>
<dbReference type="FunFam" id="3.30.160.60:FF:000508">
    <property type="entry name" value="Myeloid zinc finger 1"/>
    <property type="match status" value="2"/>
</dbReference>
<dbReference type="FunFam" id="3.30.160.60:FF:001155">
    <property type="entry name" value="Zinc finger 30C"/>
    <property type="match status" value="1"/>
</dbReference>
<dbReference type="FunFam" id="3.30.160.60:FF:000706">
    <property type="entry name" value="Zinc finger protein"/>
    <property type="match status" value="2"/>
</dbReference>
<dbReference type="FunFam" id="3.30.160.60:FF:000759">
    <property type="entry name" value="zinc finger protein 16"/>
    <property type="match status" value="6"/>
</dbReference>
<dbReference type="FunFam" id="3.30.160.60:FF:002716">
    <property type="entry name" value="Zinc finger protein 212"/>
    <property type="match status" value="1"/>
</dbReference>
<dbReference type="Gene3D" id="3.30.160.60">
    <property type="entry name" value="Classic Zinc Finger"/>
    <property type="match status" value="12"/>
</dbReference>
<dbReference type="InterPro" id="IPR036236">
    <property type="entry name" value="Znf_C2H2_sf"/>
</dbReference>
<dbReference type="InterPro" id="IPR013087">
    <property type="entry name" value="Znf_C2H2_type"/>
</dbReference>
<dbReference type="PANTHER" id="PTHR24394">
    <property type="entry name" value="ZINC FINGER PROTEIN"/>
    <property type="match status" value="1"/>
</dbReference>
<dbReference type="PANTHER" id="PTHR24394:SF48">
    <property type="entry name" value="ZINC FINGER PROTEIN 771"/>
    <property type="match status" value="1"/>
</dbReference>
<dbReference type="Pfam" id="PF00096">
    <property type="entry name" value="zf-C2H2"/>
    <property type="match status" value="12"/>
</dbReference>
<dbReference type="SMART" id="SM00355">
    <property type="entry name" value="ZnF_C2H2"/>
    <property type="match status" value="12"/>
</dbReference>
<dbReference type="SUPFAM" id="SSF57667">
    <property type="entry name" value="beta-beta-alpha zinc fingers"/>
    <property type="match status" value="6"/>
</dbReference>
<dbReference type="PROSITE" id="PS00028">
    <property type="entry name" value="ZINC_FINGER_C2H2_1"/>
    <property type="match status" value="12"/>
</dbReference>
<dbReference type="PROSITE" id="PS50157">
    <property type="entry name" value="ZINC_FINGER_C2H2_2"/>
    <property type="match status" value="12"/>
</dbReference>